<protein>
    <recommendedName>
        <fullName evidence="1">UPF0253 protein YaeP</fullName>
    </recommendedName>
</protein>
<evidence type="ECO:0000255" key="1">
    <source>
        <dbReference type="HAMAP-Rule" id="MF_01064"/>
    </source>
</evidence>
<proteinExistence type="inferred from homology"/>
<comment type="similarity">
    <text evidence="1">Belongs to the UPF0253 family.</text>
</comment>
<dbReference type="EMBL" id="CP000802">
    <property type="protein sequence ID" value="ABV04590.1"/>
    <property type="molecule type" value="Genomic_DNA"/>
</dbReference>
<dbReference type="RefSeq" id="WP_000417058.1">
    <property type="nucleotide sequence ID" value="NC_009800.1"/>
</dbReference>
<dbReference type="SMR" id="A7ZWD6"/>
<dbReference type="KEGG" id="ecx:EcHS_A0192"/>
<dbReference type="HOGENOM" id="CLU_190008_0_0_6"/>
<dbReference type="HAMAP" id="MF_01064">
    <property type="entry name" value="UPF0253"/>
    <property type="match status" value="1"/>
</dbReference>
<dbReference type="InterPro" id="IPR009624">
    <property type="entry name" value="UPF0253"/>
</dbReference>
<dbReference type="NCBIfam" id="NF003436">
    <property type="entry name" value="PRK04964.1"/>
    <property type="match status" value="1"/>
</dbReference>
<dbReference type="Pfam" id="PF06786">
    <property type="entry name" value="UPF0253"/>
    <property type="match status" value="1"/>
</dbReference>
<gene>
    <name evidence="1" type="primary">yaeP</name>
    <name type="ordered locus">EcHS_A0192</name>
</gene>
<organism>
    <name type="scientific">Escherichia coli O9:H4 (strain HS)</name>
    <dbReference type="NCBI Taxonomy" id="331112"/>
    <lineage>
        <taxon>Bacteria</taxon>
        <taxon>Pseudomonadati</taxon>
        <taxon>Pseudomonadota</taxon>
        <taxon>Gammaproteobacteria</taxon>
        <taxon>Enterobacterales</taxon>
        <taxon>Enterobacteriaceae</taxon>
        <taxon>Escherichia</taxon>
    </lineage>
</organism>
<sequence>MEKYCELIRKRYAEIASGDLGYVPDALGCVLKVLNEMAADDALSEAVREKAAYAAANLLVSDYVNE</sequence>
<accession>A7ZWD6</accession>
<feature type="chain" id="PRO_1000064501" description="UPF0253 protein YaeP">
    <location>
        <begin position="1"/>
        <end position="66"/>
    </location>
</feature>
<reference key="1">
    <citation type="journal article" date="2008" name="J. Bacteriol.">
        <title>The pangenome structure of Escherichia coli: comparative genomic analysis of E. coli commensal and pathogenic isolates.</title>
        <authorList>
            <person name="Rasko D.A."/>
            <person name="Rosovitz M.J."/>
            <person name="Myers G.S.A."/>
            <person name="Mongodin E.F."/>
            <person name="Fricke W.F."/>
            <person name="Gajer P."/>
            <person name="Crabtree J."/>
            <person name="Sebaihia M."/>
            <person name="Thomson N.R."/>
            <person name="Chaudhuri R."/>
            <person name="Henderson I.R."/>
            <person name="Sperandio V."/>
            <person name="Ravel J."/>
        </authorList>
    </citation>
    <scope>NUCLEOTIDE SEQUENCE [LARGE SCALE GENOMIC DNA]</scope>
    <source>
        <strain>HS</strain>
    </source>
</reference>
<name>YAEP_ECOHS</name>